<name>FB242_ARATH</name>
<proteinExistence type="predicted"/>
<keyword id="KW-1185">Reference proteome</keyword>
<protein>
    <recommendedName>
        <fullName>Putative F-box protein At4g22180</fullName>
    </recommendedName>
</protein>
<feature type="chain" id="PRO_0000283509" description="Putative F-box protein At4g22180">
    <location>
        <begin position="1"/>
        <end position="402"/>
    </location>
</feature>
<feature type="domain" description="F-box">
    <location>
        <begin position="18"/>
        <end position="64"/>
    </location>
</feature>
<organism>
    <name type="scientific">Arabidopsis thaliana</name>
    <name type="common">Mouse-ear cress</name>
    <dbReference type="NCBI Taxonomy" id="3702"/>
    <lineage>
        <taxon>Eukaryota</taxon>
        <taxon>Viridiplantae</taxon>
        <taxon>Streptophyta</taxon>
        <taxon>Embryophyta</taxon>
        <taxon>Tracheophyta</taxon>
        <taxon>Spermatophyta</taxon>
        <taxon>Magnoliopsida</taxon>
        <taxon>eudicotyledons</taxon>
        <taxon>Gunneridae</taxon>
        <taxon>Pentapetalae</taxon>
        <taxon>rosids</taxon>
        <taxon>malvids</taxon>
        <taxon>Brassicales</taxon>
        <taxon>Brassicaceae</taxon>
        <taxon>Camelineae</taxon>
        <taxon>Arabidopsis</taxon>
    </lineage>
</organism>
<dbReference type="EMBL" id="AL021712">
    <property type="protein sequence ID" value="CAA16768.2"/>
    <property type="status" value="ALT_SEQ"/>
    <property type="molecule type" value="Genomic_DNA"/>
</dbReference>
<dbReference type="EMBL" id="AL161556">
    <property type="protein sequence ID" value="CAB79173.1"/>
    <property type="status" value="ALT_SEQ"/>
    <property type="molecule type" value="Genomic_DNA"/>
</dbReference>
<dbReference type="EMBL" id="CP002687">
    <property type="protein sequence ID" value="AEE84569.1"/>
    <property type="molecule type" value="Genomic_DNA"/>
</dbReference>
<dbReference type="PIR" id="G85253">
    <property type="entry name" value="G85253"/>
</dbReference>
<dbReference type="PIR" id="T04899">
    <property type="entry name" value="T04899"/>
</dbReference>
<dbReference type="RefSeq" id="NP_567649.1">
    <property type="nucleotide sequence ID" value="NM_118340.2"/>
</dbReference>
<dbReference type="FunCoup" id="O49624">
    <property type="interactions" value="35"/>
</dbReference>
<dbReference type="STRING" id="3702.O49624"/>
<dbReference type="iPTMnet" id="O49624"/>
<dbReference type="PaxDb" id="3702-AT4G22180.1"/>
<dbReference type="EnsemblPlants" id="AT4G22180.1">
    <property type="protein sequence ID" value="AT4G22180.1"/>
    <property type="gene ID" value="AT4G22180"/>
</dbReference>
<dbReference type="GeneID" id="828308"/>
<dbReference type="Gramene" id="AT4G22180.1">
    <property type="protein sequence ID" value="AT4G22180.1"/>
    <property type="gene ID" value="AT4G22180"/>
</dbReference>
<dbReference type="KEGG" id="ath:AT4G22180"/>
<dbReference type="Araport" id="AT4G22180"/>
<dbReference type="TAIR" id="AT4G22180">
    <property type="gene designation" value="ATFDB32"/>
</dbReference>
<dbReference type="HOGENOM" id="CLU_019286_7_1_1"/>
<dbReference type="InParanoid" id="O49624"/>
<dbReference type="OMA" id="YHKRIRI"/>
<dbReference type="OrthoDB" id="642536at2759"/>
<dbReference type="PhylomeDB" id="O49624"/>
<dbReference type="PRO" id="PR:O49624"/>
<dbReference type="Proteomes" id="UP000006548">
    <property type="component" value="Chromosome 4"/>
</dbReference>
<dbReference type="ExpressionAtlas" id="O49624">
    <property type="expression patterns" value="baseline"/>
</dbReference>
<dbReference type="Gene3D" id="1.20.1280.50">
    <property type="match status" value="1"/>
</dbReference>
<dbReference type="InterPro" id="IPR036047">
    <property type="entry name" value="F-box-like_dom_sf"/>
</dbReference>
<dbReference type="InterPro" id="IPR050942">
    <property type="entry name" value="F-box_BR-signaling"/>
</dbReference>
<dbReference type="InterPro" id="IPR001810">
    <property type="entry name" value="F-box_dom"/>
</dbReference>
<dbReference type="InterPro" id="IPR005174">
    <property type="entry name" value="KIB1-4_b-propeller"/>
</dbReference>
<dbReference type="PANTHER" id="PTHR44259:SF26">
    <property type="entry name" value="F-BOX FAMILY PROTEIN-LIKE PROTEIN"/>
    <property type="match status" value="1"/>
</dbReference>
<dbReference type="PANTHER" id="PTHR44259">
    <property type="entry name" value="OS07G0183000 PROTEIN-RELATED"/>
    <property type="match status" value="1"/>
</dbReference>
<dbReference type="Pfam" id="PF03478">
    <property type="entry name" value="Beta-prop_KIB1-4"/>
    <property type="match status" value="1"/>
</dbReference>
<dbReference type="Pfam" id="PF00646">
    <property type="entry name" value="F-box"/>
    <property type="match status" value="1"/>
</dbReference>
<dbReference type="SUPFAM" id="SSF81383">
    <property type="entry name" value="F-box domain"/>
    <property type="match status" value="1"/>
</dbReference>
<comment type="sequence caution" evidence="1">
    <conflict type="erroneous gene model prediction">
        <sequence resource="EMBL-CDS" id="CAA16768"/>
    </conflict>
</comment>
<comment type="sequence caution" evidence="1">
    <conflict type="erroneous gene model prediction">
        <sequence resource="EMBL-CDS" id="CAB79173"/>
    </conflict>
</comment>
<evidence type="ECO:0000305" key="1"/>
<reference key="1">
    <citation type="journal article" date="1999" name="Nature">
        <title>Sequence and analysis of chromosome 4 of the plant Arabidopsis thaliana.</title>
        <authorList>
            <person name="Mayer K.F.X."/>
            <person name="Schueller C."/>
            <person name="Wambutt R."/>
            <person name="Murphy G."/>
            <person name="Volckaert G."/>
            <person name="Pohl T."/>
            <person name="Duesterhoeft A."/>
            <person name="Stiekema W."/>
            <person name="Entian K.-D."/>
            <person name="Terryn N."/>
            <person name="Harris B."/>
            <person name="Ansorge W."/>
            <person name="Brandt P."/>
            <person name="Grivell L.A."/>
            <person name="Rieger M."/>
            <person name="Weichselgartner M."/>
            <person name="de Simone V."/>
            <person name="Obermaier B."/>
            <person name="Mache R."/>
            <person name="Mueller M."/>
            <person name="Kreis M."/>
            <person name="Delseny M."/>
            <person name="Puigdomenech P."/>
            <person name="Watson M."/>
            <person name="Schmidtheini T."/>
            <person name="Reichert B."/>
            <person name="Portetelle D."/>
            <person name="Perez-Alonso M."/>
            <person name="Boutry M."/>
            <person name="Bancroft I."/>
            <person name="Vos P."/>
            <person name="Hoheisel J."/>
            <person name="Zimmermann W."/>
            <person name="Wedler H."/>
            <person name="Ridley P."/>
            <person name="Langham S.-A."/>
            <person name="McCullagh B."/>
            <person name="Bilham L."/>
            <person name="Robben J."/>
            <person name="van der Schueren J."/>
            <person name="Grymonprez B."/>
            <person name="Chuang Y.-J."/>
            <person name="Vandenbussche F."/>
            <person name="Braeken M."/>
            <person name="Weltjens I."/>
            <person name="Voet M."/>
            <person name="Bastiaens I."/>
            <person name="Aert R."/>
            <person name="Defoor E."/>
            <person name="Weitzenegger T."/>
            <person name="Bothe G."/>
            <person name="Ramsperger U."/>
            <person name="Hilbert H."/>
            <person name="Braun M."/>
            <person name="Holzer E."/>
            <person name="Brandt A."/>
            <person name="Peters S."/>
            <person name="van Staveren M."/>
            <person name="Dirkse W."/>
            <person name="Mooijman P."/>
            <person name="Klein Lankhorst R."/>
            <person name="Rose M."/>
            <person name="Hauf J."/>
            <person name="Koetter P."/>
            <person name="Berneiser S."/>
            <person name="Hempel S."/>
            <person name="Feldpausch M."/>
            <person name="Lamberth S."/>
            <person name="Van den Daele H."/>
            <person name="De Keyser A."/>
            <person name="Buysshaert C."/>
            <person name="Gielen J."/>
            <person name="Villarroel R."/>
            <person name="De Clercq R."/>
            <person name="van Montagu M."/>
            <person name="Rogers J."/>
            <person name="Cronin A."/>
            <person name="Quail M.A."/>
            <person name="Bray-Allen S."/>
            <person name="Clark L."/>
            <person name="Doggett J."/>
            <person name="Hall S."/>
            <person name="Kay M."/>
            <person name="Lennard N."/>
            <person name="McLay K."/>
            <person name="Mayes R."/>
            <person name="Pettett A."/>
            <person name="Rajandream M.A."/>
            <person name="Lyne M."/>
            <person name="Benes V."/>
            <person name="Rechmann S."/>
            <person name="Borkova D."/>
            <person name="Bloecker H."/>
            <person name="Scharfe M."/>
            <person name="Grimm M."/>
            <person name="Loehnert T.-H."/>
            <person name="Dose S."/>
            <person name="de Haan M."/>
            <person name="Maarse A.C."/>
            <person name="Schaefer M."/>
            <person name="Mueller-Auer S."/>
            <person name="Gabel C."/>
            <person name="Fuchs M."/>
            <person name="Fartmann B."/>
            <person name="Granderath K."/>
            <person name="Dauner D."/>
            <person name="Herzl A."/>
            <person name="Neumann S."/>
            <person name="Argiriou A."/>
            <person name="Vitale D."/>
            <person name="Liguori R."/>
            <person name="Piravandi E."/>
            <person name="Massenet O."/>
            <person name="Quigley F."/>
            <person name="Clabauld G."/>
            <person name="Muendlein A."/>
            <person name="Felber R."/>
            <person name="Schnabl S."/>
            <person name="Hiller R."/>
            <person name="Schmidt W."/>
            <person name="Lecharny A."/>
            <person name="Aubourg S."/>
            <person name="Chefdor F."/>
            <person name="Cooke R."/>
            <person name="Berger C."/>
            <person name="Monfort A."/>
            <person name="Casacuberta E."/>
            <person name="Gibbons T."/>
            <person name="Weber N."/>
            <person name="Vandenbol M."/>
            <person name="Bargues M."/>
            <person name="Terol J."/>
            <person name="Torres A."/>
            <person name="Perez-Perez A."/>
            <person name="Purnelle B."/>
            <person name="Bent E."/>
            <person name="Johnson S."/>
            <person name="Tacon D."/>
            <person name="Jesse T."/>
            <person name="Heijnen L."/>
            <person name="Schwarz S."/>
            <person name="Scholler P."/>
            <person name="Heber S."/>
            <person name="Francs P."/>
            <person name="Bielke C."/>
            <person name="Frishman D."/>
            <person name="Haase D."/>
            <person name="Lemcke K."/>
            <person name="Mewes H.-W."/>
            <person name="Stocker S."/>
            <person name="Zaccaria P."/>
            <person name="Bevan M."/>
            <person name="Wilson R.K."/>
            <person name="de la Bastide M."/>
            <person name="Habermann K."/>
            <person name="Parnell L."/>
            <person name="Dedhia N."/>
            <person name="Gnoj L."/>
            <person name="Schutz K."/>
            <person name="Huang E."/>
            <person name="Spiegel L."/>
            <person name="Sekhon M."/>
            <person name="Murray J."/>
            <person name="Sheet P."/>
            <person name="Cordes M."/>
            <person name="Abu-Threideh J."/>
            <person name="Stoneking T."/>
            <person name="Kalicki J."/>
            <person name="Graves T."/>
            <person name="Harmon G."/>
            <person name="Edwards J."/>
            <person name="Latreille P."/>
            <person name="Courtney L."/>
            <person name="Cloud J."/>
            <person name="Abbott A."/>
            <person name="Scott K."/>
            <person name="Johnson D."/>
            <person name="Minx P."/>
            <person name="Bentley D."/>
            <person name="Fulton B."/>
            <person name="Miller N."/>
            <person name="Greco T."/>
            <person name="Kemp K."/>
            <person name="Kramer J."/>
            <person name="Fulton L."/>
            <person name="Mardis E."/>
            <person name="Dante M."/>
            <person name="Pepin K."/>
            <person name="Hillier L.W."/>
            <person name="Nelson J."/>
            <person name="Spieth J."/>
            <person name="Ryan E."/>
            <person name="Andrews S."/>
            <person name="Geisel C."/>
            <person name="Layman D."/>
            <person name="Du H."/>
            <person name="Ali J."/>
            <person name="Berghoff A."/>
            <person name="Jones K."/>
            <person name="Drone K."/>
            <person name="Cotton M."/>
            <person name="Joshu C."/>
            <person name="Antonoiu B."/>
            <person name="Zidanic M."/>
            <person name="Strong C."/>
            <person name="Sun H."/>
            <person name="Lamar B."/>
            <person name="Yordan C."/>
            <person name="Ma P."/>
            <person name="Zhong J."/>
            <person name="Preston R."/>
            <person name="Vil D."/>
            <person name="Shekher M."/>
            <person name="Matero A."/>
            <person name="Shah R."/>
            <person name="Swaby I.K."/>
            <person name="O'Shaughnessy A."/>
            <person name="Rodriguez M."/>
            <person name="Hoffman J."/>
            <person name="Till S."/>
            <person name="Granat S."/>
            <person name="Shohdy N."/>
            <person name="Hasegawa A."/>
            <person name="Hameed A."/>
            <person name="Lodhi M."/>
            <person name="Johnson A."/>
            <person name="Chen E."/>
            <person name="Marra M.A."/>
            <person name="Martienssen R."/>
            <person name="McCombie W.R."/>
        </authorList>
    </citation>
    <scope>NUCLEOTIDE SEQUENCE [LARGE SCALE GENOMIC DNA]</scope>
    <source>
        <strain>cv. Columbia</strain>
    </source>
</reference>
<reference key="2">
    <citation type="journal article" date="2017" name="Plant J.">
        <title>Araport11: a complete reannotation of the Arabidopsis thaliana reference genome.</title>
        <authorList>
            <person name="Cheng C.Y."/>
            <person name="Krishnakumar V."/>
            <person name="Chan A.P."/>
            <person name="Thibaud-Nissen F."/>
            <person name="Schobel S."/>
            <person name="Town C.D."/>
        </authorList>
    </citation>
    <scope>GENOME REANNOTATION</scope>
    <source>
        <strain>cv. Columbia</strain>
    </source>
</reference>
<accession>O49624</accession>
<sequence length="402" mass="46798">MEKWHNPSSPKRLRGDTPNSWSELPLDLLTAVFERLSYANFQRAKSVCSSWHSGSRQSVPIQIPWLILFPEYDNNNSCTLFNPEEKGQVYKMKDLGVEFSKSVCTATYGSWLLMRDPLYNLYILNLFTHERVNLPPFESQLGMVKIERTIYDWFHSTLHYNGKEYHKRIRILSTVFWIDEKTKDYVVIWGLGSSCVVYSKKGDKCWNQIPETSNCHHMVYKDHKLYFSTSTYKYEFRIFDFSREIPQQIFQGYVIMQGLTLNRHRGQPGYPFATIDTKLVVTVTGDVLKVDRIVEKETRICRFFYVYKVYSSGSYKKYEKVESLGDEAILLDLGITMLANDTVGLLGNSIYFSGTHTKSKVINDTFIFSLETQKMDPVHKFDCSSAQLSSARWFLPSSHKLD</sequence>
<gene>
    <name type="ordered locus">At4g22180</name>
    <name type="ORF">T10I14.10</name>
</gene>